<organism>
    <name type="scientific">Stenotrophomonas maltophilia (strain K279a)</name>
    <dbReference type="NCBI Taxonomy" id="522373"/>
    <lineage>
        <taxon>Bacteria</taxon>
        <taxon>Pseudomonadati</taxon>
        <taxon>Pseudomonadota</taxon>
        <taxon>Gammaproteobacteria</taxon>
        <taxon>Lysobacterales</taxon>
        <taxon>Lysobacteraceae</taxon>
        <taxon>Stenotrophomonas</taxon>
        <taxon>Stenotrophomonas maltophilia group</taxon>
    </lineage>
</organism>
<dbReference type="EC" id="7.1.1.-" evidence="2"/>
<dbReference type="EMBL" id="AM743169">
    <property type="protein sequence ID" value="CAQ46832.1"/>
    <property type="molecule type" value="Genomic_DNA"/>
</dbReference>
<dbReference type="RefSeq" id="WP_005410463.1">
    <property type="nucleotide sequence ID" value="NC_010943.1"/>
</dbReference>
<dbReference type="SMR" id="B2FNX8"/>
<dbReference type="EnsemblBacteria" id="CAQ46832">
    <property type="protein sequence ID" value="CAQ46832"/>
    <property type="gene ID" value="Smlt3404"/>
</dbReference>
<dbReference type="KEGG" id="sml:Smlt3404"/>
<dbReference type="eggNOG" id="COG0377">
    <property type="taxonomic scope" value="Bacteria"/>
</dbReference>
<dbReference type="HOGENOM" id="CLU_055737_7_0_6"/>
<dbReference type="Proteomes" id="UP000008840">
    <property type="component" value="Chromosome"/>
</dbReference>
<dbReference type="GO" id="GO:0005886">
    <property type="term" value="C:plasma membrane"/>
    <property type="evidence" value="ECO:0007669"/>
    <property type="project" value="UniProtKB-SubCell"/>
</dbReference>
<dbReference type="GO" id="GO:0045271">
    <property type="term" value="C:respiratory chain complex I"/>
    <property type="evidence" value="ECO:0007669"/>
    <property type="project" value="TreeGrafter"/>
</dbReference>
<dbReference type="GO" id="GO:0051539">
    <property type="term" value="F:4 iron, 4 sulfur cluster binding"/>
    <property type="evidence" value="ECO:0007669"/>
    <property type="project" value="UniProtKB-KW"/>
</dbReference>
<dbReference type="GO" id="GO:0005506">
    <property type="term" value="F:iron ion binding"/>
    <property type="evidence" value="ECO:0007669"/>
    <property type="project" value="UniProtKB-UniRule"/>
</dbReference>
<dbReference type="GO" id="GO:0008137">
    <property type="term" value="F:NADH dehydrogenase (ubiquinone) activity"/>
    <property type="evidence" value="ECO:0007669"/>
    <property type="project" value="InterPro"/>
</dbReference>
<dbReference type="GO" id="GO:0050136">
    <property type="term" value="F:NADH:ubiquinone reductase (non-electrogenic) activity"/>
    <property type="evidence" value="ECO:0007669"/>
    <property type="project" value="UniProtKB-UniRule"/>
</dbReference>
<dbReference type="GO" id="GO:0048038">
    <property type="term" value="F:quinone binding"/>
    <property type="evidence" value="ECO:0007669"/>
    <property type="project" value="UniProtKB-KW"/>
</dbReference>
<dbReference type="GO" id="GO:0009060">
    <property type="term" value="P:aerobic respiration"/>
    <property type="evidence" value="ECO:0007669"/>
    <property type="project" value="TreeGrafter"/>
</dbReference>
<dbReference type="GO" id="GO:0015990">
    <property type="term" value="P:electron transport coupled proton transport"/>
    <property type="evidence" value="ECO:0007669"/>
    <property type="project" value="TreeGrafter"/>
</dbReference>
<dbReference type="FunFam" id="3.40.50.12280:FF:000001">
    <property type="entry name" value="NADH-quinone oxidoreductase subunit B 2"/>
    <property type="match status" value="1"/>
</dbReference>
<dbReference type="Gene3D" id="3.40.50.12280">
    <property type="match status" value="1"/>
</dbReference>
<dbReference type="HAMAP" id="MF_01356">
    <property type="entry name" value="NDH1_NuoB"/>
    <property type="match status" value="1"/>
</dbReference>
<dbReference type="InterPro" id="IPR006137">
    <property type="entry name" value="NADH_UbQ_OxRdtase-like_20kDa"/>
</dbReference>
<dbReference type="InterPro" id="IPR006138">
    <property type="entry name" value="NADH_UQ_OxRdtase_20Kd_su"/>
</dbReference>
<dbReference type="NCBIfam" id="TIGR01957">
    <property type="entry name" value="nuoB_fam"/>
    <property type="match status" value="1"/>
</dbReference>
<dbReference type="NCBIfam" id="NF005012">
    <property type="entry name" value="PRK06411.1"/>
    <property type="match status" value="1"/>
</dbReference>
<dbReference type="PANTHER" id="PTHR11995">
    <property type="entry name" value="NADH DEHYDROGENASE"/>
    <property type="match status" value="1"/>
</dbReference>
<dbReference type="PANTHER" id="PTHR11995:SF14">
    <property type="entry name" value="NADH DEHYDROGENASE [UBIQUINONE] IRON-SULFUR PROTEIN 7, MITOCHONDRIAL"/>
    <property type="match status" value="1"/>
</dbReference>
<dbReference type="Pfam" id="PF01058">
    <property type="entry name" value="Oxidored_q6"/>
    <property type="match status" value="1"/>
</dbReference>
<dbReference type="SUPFAM" id="SSF56770">
    <property type="entry name" value="HydA/Nqo6-like"/>
    <property type="match status" value="1"/>
</dbReference>
<dbReference type="PROSITE" id="PS01150">
    <property type="entry name" value="COMPLEX1_20K"/>
    <property type="match status" value="1"/>
</dbReference>
<sequence length="184" mass="20240">MGVIQTLDGLMNNPTPEGRVDDILRPEGDNPLLEKGFVTTSVDALLNWARTGSMWPMTFGLACCAVEMMHAGAARLDLDRYGVVFRPSPRQSDVMIVAGTLVNKMAPALRKVYDQMPDPKWVISMGSCANGGGYYHYSYSVVRGCDRVVPVDVYVPGCPPTAEALVYGILQLQKKIWRTQTIAR</sequence>
<proteinExistence type="inferred from homology"/>
<reference key="1">
    <citation type="journal article" date="2008" name="Genome Biol.">
        <title>The complete genome, comparative and functional analysis of Stenotrophomonas maltophilia reveals an organism heavily shielded by drug resistance determinants.</title>
        <authorList>
            <person name="Crossman L.C."/>
            <person name="Gould V.C."/>
            <person name="Dow J.M."/>
            <person name="Vernikos G.S."/>
            <person name="Okazaki A."/>
            <person name="Sebaihia M."/>
            <person name="Saunders D."/>
            <person name="Arrowsmith C."/>
            <person name="Carver T."/>
            <person name="Peters N."/>
            <person name="Adlem E."/>
            <person name="Kerhornou A."/>
            <person name="Lord A."/>
            <person name="Murphy L."/>
            <person name="Seeger K."/>
            <person name="Squares R."/>
            <person name="Rutter S."/>
            <person name="Quail M.A."/>
            <person name="Rajandream M.A."/>
            <person name="Harris D."/>
            <person name="Churcher C."/>
            <person name="Bentley S.D."/>
            <person name="Parkhill J."/>
            <person name="Thomson N.R."/>
            <person name="Avison M.B."/>
        </authorList>
    </citation>
    <scope>NUCLEOTIDE SEQUENCE [LARGE SCALE GENOMIC DNA]</scope>
    <source>
        <strain>K279a</strain>
    </source>
</reference>
<evidence type="ECO:0000250" key="1"/>
<evidence type="ECO:0000255" key="2">
    <source>
        <dbReference type="HAMAP-Rule" id="MF_01356"/>
    </source>
</evidence>
<name>NUOB_STRMK</name>
<protein>
    <recommendedName>
        <fullName evidence="2">NADH-quinone oxidoreductase subunit B</fullName>
        <ecNumber evidence="2">7.1.1.-</ecNumber>
    </recommendedName>
    <alternativeName>
        <fullName evidence="2">NADH dehydrogenase I subunit B</fullName>
    </alternativeName>
    <alternativeName>
        <fullName evidence="2">NDH-1 subunit B</fullName>
    </alternativeName>
</protein>
<gene>
    <name evidence="2" type="primary">nuoB</name>
    <name type="ordered locus">Smlt3404</name>
</gene>
<keyword id="KW-0004">4Fe-4S</keyword>
<keyword id="KW-1003">Cell membrane</keyword>
<keyword id="KW-0408">Iron</keyword>
<keyword id="KW-0411">Iron-sulfur</keyword>
<keyword id="KW-0472">Membrane</keyword>
<keyword id="KW-0479">Metal-binding</keyword>
<keyword id="KW-0520">NAD</keyword>
<keyword id="KW-0874">Quinone</keyword>
<keyword id="KW-1185">Reference proteome</keyword>
<keyword id="KW-1278">Translocase</keyword>
<keyword id="KW-0813">Transport</keyword>
<keyword id="KW-0830">Ubiquinone</keyword>
<accession>B2FNX8</accession>
<comment type="function">
    <text evidence="1">NDH-1 shuttles electrons from NADH, via FMN and iron-sulfur (Fe-S) centers, to quinones in the respiratory chain. Couples the redox reaction to proton translocation (for every two electrons transferred, four hydrogen ions are translocated across the cytoplasmic membrane), and thus conserves the redox energy in a proton gradient (By similarity).</text>
</comment>
<comment type="catalytic activity">
    <reaction evidence="2">
        <text>a quinone + NADH + 5 H(+)(in) = a quinol + NAD(+) + 4 H(+)(out)</text>
        <dbReference type="Rhea" id="RHEA:57888"/>
        <dbReference type="ChEBI" id="CHEBI:15378"/>
        <dbReference type="ChEBI" id="CHEBI:24646"/>
        <dbReference type="ChEBI" id="CHEBI:57540"/>
        <dbReference type="ChEBI" id="CHEBI:57945"/>
        <dbReference type="ChEBI" id="CHEBI:132124"/>
    </reaction>
</comment>
<comment type="cofactor">
    <cofactor evidence="2">
        <name>[4Fe-4S] cluster</name>
        <dbReference type="ChEBI" id="CHEBI:49883"/>
    </cofactor>
    <text evidence="2">Binds 1 [4Fe-4S] cluster.</text>
</comment>
<comment type="subunit">
    <text evidence="2">NDH-1 is composed of 14 different subunits. Subunits NuoB, C, D, E, F, and G constitute the peripheral sector of the complex.</text>
</comment>
<comment type="subcellular location">
    <subcellularLocation>
        <location evidence="2">Cell membrane</location>
        <topology evidence="2">Peripheral membrane protein</topology>
        <orientation evidence="2">Cytoplasmic side</orientation>
    </subcellularLocation>
</comment>
<comment type="similarity">
    <text evidence="2">Belongs to the complex I 20 kDa subunit family.</text>
</comment>
<feature type="chain" id="PRO_0000358484" description="NADH-quinone oxidoreductase subunit B">
    <location>
        <begin position="1"/>
        <end position="184"/>
    </location>
</feature>
<feature type="binding site" evidence="2">
    <location>
        <position position="63"/>
    </location>
    <ligand>
        <name>[4Fe-4S] cluster</name>
        <dbReference type="ChEBI" id="CHEBI:49883"/>
    </ligand>
</feature>
<feature type="binding site" evidence="2">
    <location>
        <position position="64"/>
    </location>
    <ligand>
        <name>[4Fe-4S] cluster</name>
        <dbReference type="ChEBI" id="CHEBI:49883"/>
    </ligand>
</feature>
<feature type="binding site" evidence="2">
    <location>
        <position position="128"/>
    </location>
    <ligand>
        <name>[4Fe-4S] cluster</name>
        <dbReference type="ChEBI" id="CHEBI:49883"/>
    </ligand>
</feature>
<feature type="binding site" evidence="2">
    <location>
        <position position="158"/>
    </location>
    <ligand>
        <name>[4Fe-4S] cluster</name>
        <dbReference type="ChEBI" id="CHEBI:49883"/>
    </ligand>
</feature>